<keyword id="KW-0472">Membrane</keyword>
<keyword id="KW-0496">Mitochondrion</keyword>
<keyword id="KW-1000">Mitochondrion outer membrane</keyword>
<keyword id="KW-1185">Reference proteome</keyword>
<keyword id="KW-0677">Repeat</keyword>
<keyword id="KW-0812">Transmembrane</keyword>
<keyword id="KW-1133">Transmembrane helix</keyword>
<keyword id="KW-0813">Transport</keyword>
<comment type="function">
    <text evidence="1">Transmembrane protein of the mitochondrial outer membrane that controls mitochondrial organization. May regulate the assembly of the MICOS (mitochondrial contact site and cristae organizing system) complex which is essential to the biogenesis and dynamics of mitochondrial cristae, the inwards folds of the inner mitochondrial membrane. Through its interaction with the EMC (endoplasmic reticulum membrane protein complex), could regulate mitochondrial lipid homeostasis and thereby mitochondrial fission.</text>
</comment>
<comment type="subcellular location">
    <subcellularLocation>
        <location evidence="1">Mitochondrion outer membrane</location>
        <topology evidence="2">Multi-pass membrane protein</topology>
    </subcellularLocation>
</comment>
<comment type="similarity">
    <text evidence="4">Belongs to the mitochondrial carrier (TC 2.A.29) family.</text>
</comment>
<accession>Q5ZIG3</accession>
<name>S2546_CHICK</name>
<organism>
    <name type="scientific">Gallus gallus</name>
    <name type="common">Chicken</name>
    <dbReference type="NCBI Taxonomy" id="9031"/>
    <lineage>
        <taxon>Eukaryota</taxon>
        <taxon>Metazoa</taxon>
        <taxon>Chordata</taxon>
        <taxon>Craniata</taxon>
        <taxon>Vertebrata</taxon>
        <taxon>Euteleostomi</taxon>
        <taxon>Archelosauria</taxon>
        <taxon>Archosauria</taxon>
        <taxon>Dinosauria</taxon>
        <taxon>Saurischia</taxon>
        <taxon>Theropoda</taxon>
        <taxon>Coelurosauria</taxon>
        <taxon>Aves</taxon>
        <taxon>Neognathae</taxon>
        <taxon>Galloanserae</taxon>
        <taxon>Galliformes</taxon>
        <taxon>Phasianidae</taxon>
        <taxon>Phasianinae</taxon>
        <taxon>Gallus</taxon>
    </lineage>
</organism>
<protein>
    <recommendedName>
        <fullName evidence="1">Mitochondrial outer membrane protein SLC25A46</fullName>
    </recommendedName>
    <alternativeName>
        <fullName evidence="1">Solute carrier family 25 member 46</fullName>
    </alternativeName>
</protein>
<evidence type="ECO:0000250" key="1">
    <source>
        <dbReference type="UniProtKB" id="Q96AG3"/>
    </source>
</evidence>
<evidence type="ECO:0000255" key="2"/>
<evidence type="ECO:0000256" key="3">
    <source>
        <dbReference type="SAM" id="MobiDB-lite"/>
    </source>
</evidence>
<evidence type="ECO:0000305" key="4"/>
<evidence type="ECO:0000312" key="5">
    <source>
        <dbReference type="EMBL" id="CAG32480.1"/>
    </source>
</evidence>
<gene>
    <name evidence="1" type="primary">SLC25A46</name>
    <name evidence="5" type="ORF">RCJMB04_26i24</name>
</gene>
<sequence length="408" mass="44642">MHPRRPEGFDGLGYRGGGREEPCPGVRPFGGGAEMGHWVTTPPDIPGSRNLHWGEKTPPYGAGTPLGAAGLNEEPGLGAGGPGAEQLNRFAGFGIGLASLFTENVLAHPCIVLRRQCQVNYHARNYHLTPFTIVNIMYSINKTQGPRALWKGMGSTFIVQGITLGTEGIISEFTPLPRELSHKWNLKQIGGHLLLKGLTHVIAMPFYSASLIETVQSEIIRDNPGILDCVKEGIGRVVGMGVPHSKRLLPLMVLIFPTALHGVLHYVISSIVQKLVLLFLKRENSHSLPTESSTSVQSMLDAYFPELIASFAASLCADVMLYPLETVLHRLHIQGTRTIIDNTDLGYEVLPINTQYEGMRDCINTIKREEGMLGFYKGFGAVVVQYTLHVAVLQLTKIIYSTLLQNVS</sequence>
<proteinExistence type="evidence at transcript level"/>
<reference key="1">
    <citation type="journal article" date="2005" name="Genome Biol.">
        <title>Full-length cDNAs from chicken bursal lymphocytes to facilitate gene function analysis.</title>
        <authorList>
            <person name="Caldwell R.B."/>
            <person name="Kierzek A.M."/>
            <person name="Arakawa H."/>
            <person name="Bezzubov Y."/>
            <person name="Zaim J."/>
            <person name="Fiedler P."/>
            <person name="Kutter S."/>
            <person name="Blagodatski A."/>
            <person name="Kostovska D."/>
            <person name="Koter M."/>
            <person name="Plachy J."/>
            <person name="Carninci P."/>
            <person name="Hayashizaki Y."/>
            <person name="Buerstedde J.-M."/>
        </authorList>
    </citation>
    <scope>NUCLEOTIDE SEQUENCE [LARGE SCALE MRNA]</scope>
    <source>
        <strain>CB</strain>
        <tissue>Bursa of Fabricius</tissue>
    </source>
</reference>
<dbReference type="EMBL" id="AJ720821">
    <property type="protein sequence ID" value="CAG32480.1"/>
    <property type="molecule type" value="mRNA"/>
</dbReference>
<dbReference type="RefSeq" id="NP_001007831.1">
    <property type="nucleotide sequence ID" value="NM_001007830.2"/>
</dbReference>
<dbReference type="FunCoup" id="Q5ZIG3">
    <property type="interactions" value="1082"/>
</dbReference>
<dbReference type="PaxDb" id="9031-ENSGALP00000000331"/>
<dbReference type="Ensembl" id="ENSGALT00010022933.1">
    <property type="protein sequence ID" value="ENSGALP00010013257.1"/>
    <property type="gene ID" value="ENSGALG00010009617.1"/>
</dbReference>
<dbReference type="GeneID" id="415610"/>
<dbReference type="KEGG" id="gga:415610"/>
<dbReference type="CTD" id="91137"/>
<dbReference type="VEuPathDB" id="HostDB:geneid_415610"/>
<dbReference type="eggNOG" id="KOG2954">
    <property type="taxonomic scope" value="Eukaryota"/>
</dbReference>
<dbReference type="GeneTree" id="ENSGT00390000015874"/>
<dbReference type="HOGENOM" id="CLU_047010_0_0_1"/>
<dbReference type="InParanoid" id="Q5ZIG3"/>
<dbReference type="OMA" id="RQCQVNH"/>
<dbReference type="OrthoDB" id="2403262at2759"/>
<dbReference type="PhylomeDB" id="Q5ZIG3"/>
<dbReference type="TreeFam" id="TF313365"/>
<dbReference type="PRO" id="PR:Q5ZIG3"/>
<dbReference type="Proteomes" id="UP000000539">
    <property type="component" value="Chromosome Z"/>
</dbReference>
<dbReference type="Bgee" id="ENSGALG00000000253">
    <property type="expression patterns" value="Expressed in spermatocyte and 12 other cell types or tissues"/>
</dbReference>
<dbReference type="GO" id="GO:0005741">
    <property type="term" value="C:mitochondrial outer membrane"/>
    <property type="evidence" value="ECO:0000250"/>
    <property type="project" value="UniProtKB"/>
</dbReference>
<dbReference type="GO" id="GO:0044877">
    <property type="term" value="F:protein-containing complex binding"/>
    <property type="evidence" value="ECO:0007669"/>
    <property type="project" value="Ensembl"/>
</dbReference>
<dbReference type="GO" id="GO:0061564">
    <property type="term" value="P:axon development"/>
    <property type="evidence" value="ECO:0000318"/>
    <property type="project" value="GO_Central"/>
</dbReference>
<dbReference type="GO" id="GO:0042407">
    <property type="term" value="P:cristae formation"/>
    <property type="evidence" value="ECO:0007669"/>
    <property type="project" value="Ensembl"/>
</dbReference>
<dbReference type="GO" id="GO:0000266">
    <property type="term" value="P:mitochondrial fission"/>
    <property type="evidence" value="ECO:0000250"/>
    <property type="project" value="UniProtKB"/>
</dbReference>
<dbReference type="GO" id="GO:0090149">
    <property type="term" value="P:mitochondrial membrane fission"/>
    <property type="evidence" value="ECO:0007669"/>
    <property type="project" value="InterPro"/>
</dbReference>
<dbReference type="GO" id="GO:0055091">
    <property type="term" value="P:phospholipid homeostasis"/>
    <property type="evidence" value="ECO:0007669"/>
    <property type="project" value="Ensembl"/>
</dbReference>
<dbReference type="GO" id="GO:0008535">
    <property type="term" value="P:respiratory chain complex IV assembly"/>
    <property type="evidence" value="ECO:0007669"/>
    <property type="project" value="Ensembl"/>
</dbReference>
<dbReference type="FunFam" id="1.50.40.10:FF:000057">
    <property type="entry name" value="Solute carrier family 25 member 46"/>
    <property type="match status" value="1"/>
</dbReference>
<dbReference type="Gene3D" id="1.50.40.10">
    <property type="entry name" value="Mitochondrial carrier domain"/>
    <property type="match status" value="2"/>
</dbReference>
<dbReference type="InterPro" id="IPR018108">
    <property type="entry name" value="Mitochondrial_sb/sol_carrier"/>
</dbReference>
<dbReference type="InterPro" id="IPR023395">
    <property type="entry name" value="Mt_carrier_dom_sf"/>
</dbReference>
<dbReference type="InterPro" id="IPR039158">
    <property type="entry name" value="SLC25A46"/>
</dbReference>
<dbReference type="PANTHER" id="PTHR21252:SF2">
    <property type="entry name" value="MITOCHONDRIAL OUTER MEMBRANE PROTEIN SLC25A46"/>
    <property type="match status" value="1"/>
</dbReference>
<dbReference type="PANTHER" id="PTHR21252">
    <property type="entry name" value="TB1 PROTEIN-RELATED"/>
    <property type="match status" value="1"/>
</dbReference>
<dbReference type="Pfam" id="PF00153">
    <property type="entry name" value="Mito_carr"/>
    <property type="match status" value="2"/>
</dbReference>
<dbReference type="SUPFAM" id="SSF103506">
    <property type="entry name" value="Mitochondrial carrier"/>
    <property type="match status" value="1"/>
</dbReference>
<dbReference type="PROSITE" id="PS50920">
    <property type="entry name" value="SOLCAR"/>
    <property type="match status" value="2"/>
</dbReference>
<feature type="chain" id="PRO_0000291831" description="Mitochondrial outer membrane protein SLC25A46">
    <location>
        <begin position="1"/>
        <end position="408"/>
    </location>
</feature>
<feature type="transmembrane region" description="Helical; Name=1" evidence="2">
    <location>
        <begin position="93"/>
        <end position="113"/>
    </location>
</feature>
<feature type="transmembrane region" description="Helical; Name=2" evidence="2">
    <location>
        <begin position="157"/>
        <end position="177"/>
    </location>
</feature>
<feature type="transmembrane region" description="Helical; Name=3" evidence="2">
    <location>
        <begin position="189"/>
        <end position="209"/>
    </location>
</feature>
<feature type="transmembrane region" description="Helical; Name=4" evidence="2">
    <location>
        <begin position="248"/>
        <end position="268"/>
    </location>
</feature>
<feature type="transmembrane region" description="Helical; Name=5" evidence="2">
    <location>
        <begin position="304"/>
        <end position="324"/>
    </location>
</feature>
<feature type="transmembrane region" description="Helical; Name=6" evidence="2">
    <location>
        <begin position="373"/>
        <end position="393"/>
    </location>
</feature>
<feature type="repeat" description="Solcar 1">
    <location>
        <begin position="86"/>
        <end position="177"/>
    </location>
</feature>
<feature type="repeat" description="Solcar 2">
    <location>
        <begin position="301"/>
        <end position="403"/>
    </location>
</feature>
<feature type="region of interest" description="Disordered" evidence="3">
    <location>
        <begin position="1"/>
        <end position="23"/>
    </location>
</feature>
<feature type="region of interest" description="Disordered" evidence="3">
    <location>
        <begin position="52"/>
        <end position="80"/>
    </location>
</feature>
<feature type="compositionally biased region" description="Low complexity" evidence="3">
    <location>
        <begin position="66"/>
        <end position="76"/>
    </location>
</feature>